<dbReference type="EC" id="2.5.1.78" evidence="1"/>
<dbReference type="EMBL" id="CP000232">
    <property type="protein sequence ID" value="ABC19235.1"/>
    <property type="molecule type" value="Genomic_DNA"/>
</dbReference>
<dbReference type="RefSeq" id="YP_429778.1">
    <property type="nucleotide sequence ID" value="NC_007644.1"/>
</dbReference>
<dbReference type="SMR" id="Q2RK04"/>
<dbReference type="STRING" id="264732.Moth_0918"/>
<dbReference type="EnsemblBacteria" id="ABC19235">
    <property type="protein sequence ID" value="ABC19235"/>
    <property type="gene ID" value="Moth_0918"/>
</dbReference>
<dbReference type="KEGG" id="mta:Moth_0918"/>
<dbReference type="PATRIC" id="fig|264732.11.peg.986"/>
<dbReference type="eggNOG" id="COG0054">
    <property type="taxonomic scope" value="Bacteria"/>
</dbReference>
<dbReference type="HOGENOM" id="CLU_089358_1_1_9"/>
<dbReference type="OrthoDB" id="9809709at2"/>
<dbReference type="UniPathway" id="UPA00275">
    <property type="reaction ID" value="UER00404"/>
</dbReference>
<dbReference type="GO" id="GO:0005829">
    <property type="term" value="C:cytosol"/>
    <property type="evidence" value="ECO:0007669"/>
    <property type="project" value="TreeGrafter"/>
</dbReference>
<dbReference type="GO" id="GO:0009349">
    <property type="term" value="C:riboflavin synthase complex"/>
    <property type="evidence" value="ECO:0007669"/>
    <property type="project" value="InterPro"/>
</dbReference>
<dbReference type="GO" id="GO:0000906">
    <property type="term" value="F:6,7-dimethyl-8-ribityllumazine synthase activity"/>
    <property type="evidence" value="ECO:0007669"/>
    <property type="project" value="UniProtKB-UniRule"/>
</dbReference>
<dbReference type="GO" id="GO:0009231">
    <property type="term" value="P:riboflavin biosynthetic process"/>
    <property type="evidence" value="ECO:0007669"/>
    <property type="project" value="UniProtKB-UniRule"/>
</dbReference>
<dbReference type="CDD" id="cd09209">
    <property type="entry name" value="Lumazine_synthase-I"/>
    <property type="match status" value="1"/>
</dbReference>
<dbReference type="FunFam" id="3.40.50.960:FF:000001">
    <property type="entry name" value="6,7-dimethyl-8-ribityllumazine synthase"/>
    <property type="match status" value="1"/>
</dbReference>
<dbReference type="Gene3D" id="3.40.50.960">
    <property type="entry name" value="Lumazine/riboflavin synthase"/>
    <property type="match status" value="1"/>
</dbReference>
<dbReference type="HAMAP" id="MF_00178">
    <property type="entry name" value="Lumazine_synth"/>
    <property type="match status" value="1"/>
</dbReference>
<dbReference type="InterPro" id="IPR034964">
    <property type="entry name" value="LS"/>
</dbReference>
<dbReference type="InterPro" id="IPR002180">
    <property type="entry name" value="LS/RS"/>
</dbReference>
<dbReference type="InterPro" id="IPR036467">
    <property type="entry name" value="LS/RS_sf"/>
</dbReference>
<dbReference type="NCBIfam" id="TIGR00114">
    <property type="entry name" value="lumazine-synth"/>
    <property type="match status" value="1"/>
</dbReference>
<dbReference type="NCBIfam" id="NF000812">
    <property type="entry name" value="PRK00061.1-4"/>
    <property type="match status" value="1"/>
</dbReference>
<dbReference type="PANTHER" id="PTHR21058:SF0">
    <property type="entry name" value="6,7-DIMETHYL-8-RIBITYLLUMAZINE SYNTHASE"/>
    <property type="match status" value="1"/>
</dbReference>
<dbReference type="PANTHER" id="PTHR21058">
    <property type="entry name" value="6,7-DIMETHYL-8-RIBITYLLUMAZINE SYNTHASE DMRL SYNTHASE LUMAZINE SYNTHASE"/>
    <property type="match status" value="1"/>
</dbReference>
<dbReference type="Pfam" id="PF00885">
    <property type="entry name" value="DMRL_synthase"/>
    <property type="match status" value="1"/>
</dbReference>
<dbReference type="SUPFAM" id="SSF52121">
    <property type="entry name" value="Lumazine synthase"/>
    <property type="match status" value="1"/>
</dbReference>
<protein>
    <recommendedName>
        <fullName evidence="1">6,7-dimethyl-8-ribityllumazine synthase</fullName>
        <shortName evidence="1">DMRL synthase</shortName>
        <shortName evidence="1">LS</shortName>
        <shortName evidence="1">Lumazine synthase</shortName>
        <ecNumber evidence="1">2.5.1.78</ecNumber>
    </recommendedName>
</protein>
<evidence type="ECO:0000255" key="1">
    <source>
        <dbReference type="HAMAP-Rule" id="MF_00178"/>
    </source>
</evidence>
<gene>
    <name evidence="1" type="primary">ribH</name>
    <name type="ordered locus">Moth_0918</name>
</gene>
<name>RISB_MOOTA</name>
<keyword id="KW-0686">Riboflavin biosynthesis</keyword>
<keyword id="KW-0808">Transferase</keyword>
<sequence length="155" mass="16438">MPNIMEGQLEGRGLKFGIVVSRFNEFITSRLLDGALDALNRHGADPGAIDIAWVPGAFEIPLTAQKMAARGYDAVICLGAVIRGATPHFEYVAAEVTKGIAQVSLNSGVPVIYGLITADNIEQAIERAGTKAGNKGFDAAMTAMEMANLFKVMAR</sequence>
<accession>Q2RK04</accession>
<organism>
    <name type="scientific">Moorella thermoacetica (strain ATCC 39073 / JCM 9320)</name>
    <dbReference type="NCBI Taxonomy" id="264732"/>
    <lineage>
        <taxon>Bacteria</taxon>
        <taxon>Bacillati</taxon>
        <taxon>Bacillota</taxon>
        <taxon>Clostridia</taxon>
        <taxon>Moorellales</taxon>
        <taxon>Moorellaceae</taxon>
        <taxon>Moorella</taxon>
    </lineage>
</organism>
<feature type="chain" id="PRO_1000195503" description="6,7-dimethyl-8-ribityllumazine synthase">
    <location>
        <begin position="1"/>
        <end position="155"/>
    </location>
</feature>
<feature type="active site" description="Proton donor" evidence="1">
    <location>
        <position position="88"/>
    </location>
</feature>
<feature type="binding site" evidence="1">
    <location>
        <position position="23"/>
    </location>
    <ligand>
        <name>5-amino-6-(D-ribitylamino)uracil</name>
        <dbReference type="ChEBI" id="CHEBI:15934"/>
    </ligand>
</feature>
<feature type="binding site" evidence="1">
    <location>
        <begin position="57"/>
        <end position="59"/>
    </location>
    <ligand>
        <name>5-amino-6-(D-ribitylamino)uracil</name>
        <dbReference type="ChEBI" id="CHEBI:15934"/>
    </ligand>
</feature>
<feature type="binding site" evidence="1">
    <location>
        <begin position="80"/>
        <end position="82"/>
    </location>
    <ligand>
        <name>5-amino-6-(D-ribitylamino)uracil</name>
        <dbReference type="ChEBI" id="CHEBI:15934"/>
    </ligand>
</feature>
<feature type="binding site" evidence="1">
    <location>
        <begin position="85"/>
        <end position="86"/>
    </location>
    <ligand>
        <name>(2S)-2-hydroxy-3-oxobutyl phosphate</name>
        <dbReference type="ChEBI" id="CHEBI:58830"/>
    </ligand>
</feature>
<feature type="binding site" evidence="1">
    <location>
        <position position="113"/>
    </location>
    <ligand>
        <name>5-amino-6-(D-ribitylamino)uracil</name>
        <dbReference type="ChEBI" id="CHEBI:15934"/>
    </ligand>
</feature>
<feature type="binding site" evidence="1">
    <location>
        <position position="127"/>
    </location>
    <ligand>
        <name>(2S)-2-hydroxy-3-oxobutyl phosphate</name>
        <dbReference type="ChEBI" id="CHEBI:58830"/>
    </ligand>
</feature>
<proteinExistence type="inferred from homology"/>
<reference key="1">
    <citation type="journal article" date="2008" name="Environ. Microbiol.">
        <title>The complete genome sequence of Moorella thermoacetica (f. Clostridium thermoaceticum).</title>
        <authorList>
            <person name="Pierce E."/>
            <person name="Xie G."/>
            <person name="Barabote R.D."/>
            <person name="Saunders E."/>
            <person name="Han C.S."/>
            <person name="Detter J.C."/>
            <person name="Richardson P."/>
            <person name="Brettin T.S."/>
            <person name="Das A."/>
            <person name="Ljungdahl L.G."/>
            <person name="Ragsdale S.W."/>
        </authorList>
    </citation>
    <scope>NUCLEOTIDE SEQUENCE [LARGE SCALE GENOMIC DNA]</scope>
    <source>
        <strain>ATCC 39073 / JCM 9320</strain>
    </source>
</reference>
<comment type="function">
    <text evidence="1">Catalyzes the formation of 6,7-dimethyl-8-ribityllumazine by condensation of 5-amino-6-(D-ribitylamino)uracil with 3,4-dihydroxy-2-butanone 4-phosphate. This is the penultimate step in the biosynthesis of riboflavin.</text>
</comment>
<comment type="catalytic activity">
    <reaction evidence="1">
        <text>(2S)-2-hydroxy-3-oxobutyl phosphate + 5-amino-6-(D-ribitylamino)uracil = 6,7-dimethyl-8-(1-D-ribityl)lumazine + phosphate + 2 H2O + H(+)</text>
        <dbReference type="Rhea" id="RHEA:26152"/>
        <dbReference type="ChEBI" id="CHEBI:15377"/>
        <dbReference type="ChEBI" id="CHEBI:15378"/>
        <dbReference type="ChEBI" id="CHEBI:15934"/>
        <dbReference type="ChEBI" id="CHEBI:43474"/>
        <dbReference type="ChEBI" id="CHEBI:58201"/>
        <dbReference type="ChEBI" id="CHEBI:58830"/>
        <dbReference type="EC" id="2.5.1.78"/>
    </reaction>
</comment>
<comment type="pathway">
    <text evidence="1">Cofactor biosynthesis; riboflavin biosynthesis; riboflavin from 2-hydroxy-3-oxobutyl phosphate and 5-amino-6-(D-ribitylamino)uracil: step 1/2.</text>
</comment>
<comment type="similarity">
    <text evidence="1">Belongs to the DMRL synthase family.</text>
</comment>